<sequence>MASSGSCHSLLSSASPISPALFSRHRAAAVGGGASRASKVQSQVRCLARDEDSKGCANVSKAETNEEKETTPSSRRRCLVCLGAVTLISATGPPNGLAADAMNKAGVQKAVCRNCNGSGAVICDMCGGTGKWKALNRKRAKDVYEFTECPNCYGRGKLVCPVCLGTGLPNNKGLLRRPEAKQLLDKMYNGKILPRS</sequence>
<accession>A0A1D6KL43</accession>
<accession>B6TWX9</accession>
<keyword id="KW-0150">Chloroplast</keyword>
<keyword id="KW-0479">Metal-binding</keyword>
<keyword id="KW-0934">Plastid</keyword>
<keyword id="KW-1185">Reference proteome</keyword>
<keyword id="KW-0677">Repeat</keyword>
<keyword id="KW-0793">Thylakoid</keyword>
<keyword id="KW-0809">Transit peptide</keyword>
<keyword id="KW-0862">Zinc</keyword>
<keyword id="KW-0863">Zinc-finger</keyword>
<protein>
    <recommendedName>
        <fullName evidence="5">Protein PHOTOSYSTEM I ASSEMBLY 2, chloroplastic</fullName>
    </recommendedName>
</protein>
<evidence type="ECO:0000250" key="1">
    <source>
        <dbReference type="UniProtKB" id="Q6A662"/>
    </source>
</evidence>
<evidence type="ECO:0000255" key="2"/>
<evidence type="ECO:0000255" key="3">
    <source>
        <dbReference type="PROSITE-ProRule" id="PRU00546"/>
    </source>
</evidence>
<evidence type="ECO:0000269" key="4">
    <source>
    </source>
</evidence>
<evidence type="ECO:0000303" key="5">
    <source>
    </source>
</evidence>
<evidence type="ECO:0000305" key="6"/>
<evidence type="ECO:0000312" key="7">
    <source>
        <dbReference type="EMBL" id="ONM03610.1"/>
    </source>
</evidence>
<reference key="1">
    <citation type="journal article" date="2009" name="Science">
        <title>The B73 maize genome: complexity, diversity, and dynamics.</title>
        <authorList>
            <person name="Schnable P.S."/>
            <person name="Ware D."/>
            <person name="Fulton R.S."/>
            <person name="Stein J.C."/>
            <person name="Wei F."/>
            <person name="Pasternak S."/>
            <person name="Liang C."/>
            <person name="Zhang J."/>
            <person name="Fulton L."/>
            <person name="Graves T.A."/>
            <person name="Minx P."/>
            <person name="Reily A.D."/>
            <person name="Courtney L."/>
            <person name="Kruchowski S.S."/>
            <person name="Tomlinson C."/>
            <person name="Strong C."/>
            <person name="Delehaunty K."/>
            <person name="Fronick C."/>
            <person name="Courtney B."/>
            <person name="Rock S.M."/>
            <person name="Belter E."/>
            <person name="Du F."/>
            <person name="Kim K."/>
            <person name="Abbott R.M."/>
            <person name="Cotton M."/>
            <person name="Levy A."/>
            <person name="Marchetto P."/>
            <person name="Ochoa K."/>
            <person name="Jackson S.M."/>
            <person name="Gillam B."/>
            <person name="Chen W."/>
            <person name="Yan L."/>
            <person name="Higginbotham J."/>
            <person name="Cardenas M."/>
            <person name="Waligorski J."/>
            <person name="Applebaum E."/>
            <person name="Phelps L."/>
            <person name="Falcone J."/>
            <person name="Kanchi K."/>
            <person name="Thane T."/>
            <person name="Scimone A."/>
            <person name="Thane N."/>
            <person name="Henke J."/>
            <person name="Wang T."/>
            <person name="Ruppert J."/>
            <person name="Shah N."/>
            <person name="Rotter K."/>
            <person name="Hodges J."/>
            <person name="Ingenthron E."/>
            <person name="Cordes M."/>
            <person name="Kohlberg S."/>
            <person name="Sgro J."/>
            <person name="Delgado B."/>
            <person name="Mead K."/>
            <person name="Chinwalla A."/>
            <person name="Leonard S."/>
            <person name="Crouse K."/>
            <person name="Collura K."/>
            <person name="Kudrna D."/>
            <person name="Currie J."/>
            <person name="He R."/>
            <person name="Angelova A."/>
            <person name="Rajasekar S."/>
            <person name="Mueller T."/>
            <person name="Lomeli R."/>
            <person name="Scara G."/>
            <person name="Ko A."/>
            <person name="Delaney K."/>
            <person name="Wissotski M."/>
            <person name="Lopez G."/>
            <person name="Campos D."/>
            <person name="Braidotti M."/>
            <person name="Ashley E."/>
            <person name="Golser W."/>
            <person name="Kim H."/>
            <person name="Lee S."/>
            <person name="Lin J."/>
            <person name="Dujmic Z."/>
            <person name="Kim W."/>
            <person name="Talag J."/>
            <person name="Zuccolo A."/>
            <person name="Fan C."/>
            <person name="Sebastian A."/>
            <person name="Kramer M."/>
            <person name="Spiegel L."/>
            <person name="Nascimento L."/>
            <person name="Zutavern T."/>
            <person name="Miller B."/>
            <person name="Ambroise C."/>
            <person name="Muller S."/>
            <person name="Spooner W."/>
            <person name="Narechania A."/>
            <person name="Ren L."/>
            <person name="Wei S."/>
            <person name="Kumari S."/>
            <person name="Faga B."/>
            <person name="Levy M.J."/>
            <person name="McMahan L."/>
            <person name="Van Buren P."/>
            <person name="Vaughn M.W."/>
            <person name="Ying K."/>
            <person name="Yeh C.-T."/>
            <person name="Emrich S.J."/>
            <person name="Jia Y."/>
            <person name="Kalyanaraman A."/>
            <person name="Hsia A.-P."/>
            <person name="Barbazuk W.B."/>
            <person name="Baucom R.S."/>
            <person name="Brutnell T.P."/>
            <person name="Carpita N.C."/>
            <person name="Chaparro C."/>
            <person name="Chia J.-M."/>
            <person name="Deragon J.-M."/>
            <person name="Estill J.C."/>
            <person name="Fu Y."/>
            <person name="Jeddeloh J.A."/>
            <person name="Han Y."/>
            <person name="Lee H."/>
            <person name="Li P."/>
            <person name="Lisch D.R."/>
            <person name="Liu S."/>
            <person name="Liu Z."/>
            <person name="Nagel D.H."/>
            <person name="McCann M.C."/>
            <person name="SanMiguel P."/>
            <person name="Myers A.M."/>
            <person name="Nettleton D."/>
            <person name="Nguyen J."/>
            <person name="Penning B.W."/>
            <person name="Ponnala L."/>
            <person name="Schneider K.L."/>
            <person name="Schwartz D.C."/>
            <person name="Sharma A."/>
            <person name="Soderlund C."/>
            <person name="Springer N.M."/>
            <person name="Sun Q."/>
            <person name="Wang H."/>
            <person name="Waterman M."/>
            <person name="Westerman R."/>
            <person name="Wolfgruber T.K."/>
            <person name="Yang L."/>
            <person name="Yu Y."/>
            <person name="Zhang L."/>
            <person name="Zhou S."/>
            <person name="Zhu Q."/>
            <person name="Bennetzen J.L."/>
            <person name="Dawe R.K."/>
            <person name="Jiang J."/>
            <person name="Jiang N."/>
            <person name="Presting G.G."/>
            <person name="Wessler S.R."/>
            <person name="Aluru S."/>
            <person name="Martienssen R.A."/>
            <person name="Clifton S.W."/>
            <person name="McCombie W.R."/>
            <person name="Wing R.A."/>
            <person name="Wilson R.K."/>
        </authorList>
    </citation>
    <scope>NUCLEOTIDE SEQUENCE [LARGE SCALE GENOMIC DNA]</scope>
    <source>
        <strain>cv. B73</strain>
    </source>
</reference>
<reference key="2">
    <citation type="journal article" date="2009" name="Plant Mol. Biol.">
        <title>Insights into corn genes derived from large-scale cDNA sequencing.</title>
        <authorList>
            <person name="Alexandrov N.N."/>
            <person name="Brover V.V."/>
            <person name="Freidin S."/>
            <person name="Troukhan M.E."/>
            <person name="Tatarinova T.V."/>
            <person name="Zhang H."/>
            <person name="Swaller T.J."/>
            <person name="Lu Y.-P."/>
            <person name="Bouck J."/>
            <person name="Flavell R.B."/>
            <person name="Feldmann K.A."/>
        </authorList>
    </citation>
    <scope>NUCLEOTIDE SEQUENCE [LARGE SCALE MRNA]</scope>
</reference>
<reference key="3">
    <citation type="journal article" date="2014" name="J. Biol. Chem.">
        <title>A thylakoid membrane protein harboring a DnaJ-type zinc finger domain is required for photosystem I accumulation in plants.</title>
        <authorList>
            <person name="Fristedt R."/>
            <person name="Williams-Carrier R."/>
            <person name="Merchant S.S."/>
            <person name="Barkan A."/>
        </authorList>
    </citation>
    <scope>FUNCTION</scope>
    <scope>SUBCELLULAR LOCATION</scope>
    <scope>DISRUPTION PHENOTYPE</scope>
</reference>
<organism>
    <name type="scientific">Zea mays</name>
    <name type="common">Maize</name>
    <dbReference type="NCBI Taxonomy" id="4577"/>
    <lineage>
        <taxon>Eukaryota</taxon>
        <taxon>Viridiplantae</taxon>
        <taxon>Streptophyta</taxon>
        <taxon>Embryophyta</taxon>
        <taxon>Tracheophyta</taxon>
        <taxon>Spermatophyta</taxon>
        <taxon>Magnoliopsida</taxon>
        <taxon>Liliopsida</taxon>
        <taxon>Poales</taxon>
        <taxon>Poaceae</taxon>
        <taxon>PACMAD clade</taxon>
        <taxon>Panicoideae</taxon>
        <taxon>Andropogonodae</taxon>
        <taxon>Andropogoneae</taxon>
        <taxon>Tripsacinae</taxon>
        <taxon>Zea</taxon>
    </lineage>
</organism>
<gene>
    <name evidence="5" type="primary">PSA2</name>
    <name evidence="7" type="ORF">ZEAMMB73_Zm00001d031738</name>
</gene>
<name>PSA2_MAIZE</name>
<feature type="transit peptide" description="Chloroplast" evidence="2">
    <location>
        <begin position="1"/>
        <end position="36"/>
    </location>
</feature>
<feature type="chain" id="PRO_0000441339" description="Protein PHOTOSYSTEM I ASSEMBLY 2, chloroplastic">
    <location>
        <begin position="37"/>
        <end position="196"/>
    </location>
</feature>
<feature type="repeat" description="CXXCXGXG motif" evidence="1">
    <location>
        <begin position="112"/>
        <end position="119"/>
    </location>
</feature>
<feature type="repeat" description="CXXCXGXG motif" evidence="1">
    <location>
        <begin position="123"/>
        <end position="130"/>
    </location>
</feature>
<feature type="repeat" description="CXXCXGXG motif" evidence="1">
    <location>
        <begin position="149"/>
        <end position="156"/>
    </location>
</feature>
<feature type="repeat" description="CXXCXGXG motif" evidence="1">
    <location>
        <begin position="160"/>
        <end position="167"/>
    </location>
</feature>
<feature type="zinc finger region" description="CR-type" evidence="3">
    <location>
        <begin position="96"/>
        <end position="172"/>
    </location>
</feature>
<feature type="sequence conflict" description="In Ref. 2; ACG41612." evidence="6" ref="2">
    <original>E</original>
    <variation>Q</variation>
    <location>
        <position position="145"/>
    </location>
</feature>
<dbReference type="EMBL" id="CM007647">
    <property type="protein sequence ID" value="ONM03610.1"/>
    <property type="molecule type" value="Genomic_DNA"/>
</dbReference>
<dbReference type="EMBL" id="EU969494">
    <property type="protein sequence ID" value="ACG41612.1"/>
    <property type="molecule type" value="mRNA"/>
</dbReference>
<dbReference type="RefSeq" id="NP_001144593.2">
    <property type="nucleotide sequence ID" value="NM_001151121.2"/>
</dbReference>
<dbReference type="FunCoup" id="A0A1D6KL43">
    <property type="interactions" value="3200"/>
</dbReference>
<dbReference type="STRING" id="4577.A0A1D6KL43"/>
<dbReference type="PaxDb" id="4577-GRMZM2G021687_P01"/>
<dbReference type="GeneID" id="100277608"/>
<dbReference type="KEGG" id="zma:100277608"/>
<dbReference type="eggNOG" id="ENOG502RZYB">
    <property type="taxonomic scope" value="Eukaryota"/>
</dbReference>
<dbReference type="InParanoid" id="A0A1D6KL43"/>
<dbReference type="OMA" id="RQWMTAC"/>
<dbReference type="OrthoDB" id="513375at2759"/>
<dbReference type="Proteomes" id="UP000007305">
    <property type="component" value="Unplaced"/>
</dbReference>
<dbReference type="GO" id="GO:0009507">
    <property type="term" value="C:chloroplast"/>
    <property type="evidence" value="ECO:0000318"/>
    <property type="project" value="GO_Central"/>
</dbReference>
<dbReference type="GO" id="GO:0009543">
    <property type="term" value="C:chloroplast thylakoid lumen"/>
    <property type="evidence" value="ECO:0007669"/>
    <property type="project" value="UniProtKB-SubCell"/>
</dbReference>
<dbReference type="GO" id="GO:0031977">
    <property type="term" value="C:thylakoid lumen"/>
    <property type="evidence" value="ECO:0000314"/>
    <property type="project" value="UniProtKB"/>
</dbReference>
<dbReference type="GO" id="GO:0047134">
    <property type="term" value="F:protein-disulfide reductase [NAD(P)H] activity"/>
    <property type="evidence" value="ECO:0000314"/>
    <property type="project" value="UniProtKB"/>
</dbReference>
<dbReference type="GO" id="GO:0008270">
    <property type="term" value="F:zinc ion binding"/>
    <property type="evidence" value="ECO:0007669"/>
    <property type="project" value="UniProtKB-KW"/>
</dbReference>
<dbReference type="GO" id="GO:0048564">
    <property type="term" value="P:photosystem I assembly"/>
    <property type="evidence" value="ECO:0000314"/>
    <property type="project" value="UniProtKB"/>
</dbReference>
<dbReference type="Gene3D" id="2.10.230.10">
    <property type="entry name" value="Heat shock protein DnaJ, cysteine-rich domain"/>
    <property type="match status" value="1"/>
</dbReference>
<dbReference type="InterPro" id="IPR036410">
    <property type="entry name" value="HSP_DnaJ_Cys-rich_dom_sf"/>
</dbReference>
<dbReference type="PANTHER" id="PTHR15852">
    <property type="entry name" value="PLASTID TRANSCRIPTIONALLY ACTIVE PROTEIN"/>
    <property type="match status" value="1"/>
</dbReference>
<dbReference type="PANTHER" id="PTHR15852:SF56">
    <property type="entry name" value="PROTEIN PHOTOSYSTEM I ASSEMBLY 2, CHLOROPLASTIC"/>
    <property type="match status" value="1"/>
</dbReference>
<dbReference type="SUPFAM" id="SSF57938">
    <property type="entry name" value="DnaJ/Hsp40 cysteine-rich domain"/>
    <property type="match status" value="1"/>
</dbReference>
<proteinExistence type="evidence at transcript level"/>
<comment type="function">
    <text evidence="4">Nuclear genome-encoded factor required for the accumulation of photosystem I (PSI) during plant development. May form a complex with PSAG and mediate thiol transactions in the thylakoid lumen that are important for the assembly of PSI. Possesses protein-disulfide reductase activity in vitro.</text>
</comment>
<comment type="subcellular location">
    <subcellularLocation>
        <location evidence="4">Plastid</location>
        <location evidence="4">Chloroplast thylakoid lumen</location>
    </subcellularLocation>
</comment>
<comment type="disruption phenotype">
    <text evidence="4">Slight pale green leaf phenotype.</text>
</comment>